<keyword id="KW-0175">Coiled coil</keyword>
<keyword id="KW-0507">mRNA processing</keyword>
<keyword id="KW-0508">mRNA splicing</keyword>
<keyword id="KW-0539">Nucleus</keyword>
<keyword id="KW-1185">Reference proteome</keyword>
<keyword id="KW-0747">Spliceosome</keyword>
<gene>
    <name type="primary">CWC25</name>
    <name type="ORF">FGRRES_00169</name>
    <name type="ORF">FGSG_00169</name>
</gene>
<evidence type="ECO:0000250" key="1"/>
<evidence type="ECO:0000255" key="2"/>
<evidence type="ECO:0000256" key="3">
    <source>
        <dbReference type="SAM" id="MobiDB-lite"/>
    </source>
</evidence>
<evidence type="ECO:0000305" key="4"/>
<accession>Q4IRI9</accession>
<accession>A0A098D0R5</accession>
<accession>A0A0E0RLA7</accession>
<accession>V6QSX4</accession>
<comment type="function">
    <text evidence="1">Involved in pre-mRNA splicing.</text>
</comment>
<comment type="subunit">
    <text evidence="1">Associated with the spliceosome.</text>
</comment>
<comment type="subcellular location">
    <subcellularLocation>
        <location evidence="1">Nucleus</location>
    </subcellularLocation>
</comment>
<comment type="similarity">
    <text evidence="4">Belongs to the CWC25 family.</text>
</comment>
<reference key="1">
    <citation type="journal article" date="2007" name="Science">
        <title>The Fusarium graminearum genome reveals a link between localized polymorphism and pathogen specialization.</title>
        <authorList>
            <person name="Cuomo C.A."/>
            <person name="Gueldener U."/>
            <person name="Xu J.-R."/>
            <person name="Trail F."/>
            <person name="Turgeon B.G."/>
            <person name="Di Pietro A."/>
            <person name="Walton J.D."/>
            <person name="Ma L.-J."/>
            <person name="Baker S.E."/>
            <person name="Rep M."/>
            <person name="Adam G."/>
            <person name="Antoniw J."/>
            <person name="Baldwin T."/>
            <person name="Calvo S.E."/>
            <person name="Chang Y.-L."/>
            <person name="DeCaprio D."/>
            <person name="Gale L.R."/>
            <person name="Gnerre S."/>
            <person name="Goswami R.S."/>
            <person name="Hammond-Kosack K."/>
            <person name="Harris L.J."/>
            <person name="Hilburn K."/>
            <person name="Kennell J.C."/>
            <person name="Kroken S."/>
            <person name="Magnuson J.K."/>
            <person name="Mannhaupt G."/>
            <person name="Mauceli E.W."/>
            <person name="Mewes H.-W."/>
            <person name="Mitterbauer R."/>
            <person name="Muehlbauer G."/>
            <person name="Muensterkoetter M."/>
            <person name="Nelson D."/>
            <person name="O'Donnell K."/>
            <person name="Ouellet T."/>
            <person name="Qi W."/>
            <person name="Quesneville H."/>
            <person name="Roncero M.I.G."/>
            <person name="Seong K.-Y."/>
            <person name="Tetko I.V."/>
            <person name="Urban M."/>
            <person name="Waalwijk C."/>
            <person name="Ward T.J."/>
            <person name="Yao J."/>
            <person name="Birren B.W."/>
            <person name="Kistler H.C."/>
        </authorList>
    </citation>
    <scope>NUCLEOTIDE SEQUENCE [LARGE SCALE GENOMIC DNA]</scope>
    <source>
        <strain>ATCC MYA-4620 / CBS 123657 / FGSC 9075 / NRRL 31084 / PH-1</strain>
    </source>
</reference>
<reference key="2">
    <citation type="journal article" date="2010" name="Nature">
        <title>Comparative genomics reveals mobile pathogenicity chromosomes in Fusarium.</title>
        <authorList>
            <person name="Ma L.-J."/>
            <person name="van der Does H.C."/>
            <person name="Borkovich K.A."/>
            <person name="Coleman J.J."/>
            <person name="Daboussi M.-J."/>
            <person name="Di Pietro A."/>
            <person name="Dufresne M."/>
            <person name="Freitag M."/>
            <person name="Grabherr M."/>
            <person name="Henrissat B."/>
            <person name="Houterman P.M."/>
            <person name="Kang S."/>
            <person name="Shim W.-B."/>
            <person name="Woloshuk C."/>
            <person name="Xie X."/>
            <person name="Xu J.-R."/>
            <person name="Antoniw J."/>
            <person name="Baker S.E."/>
            <person name="Bluhm B.H."/>
            <person name="Breakspear A."/>
            <person name="Brown D.W."/>
            <person name="Butchko R.A.E."/>
            <person name="Chapman S."/>
            <person name="Coulson R."/>
            <person name="Coutinho P.M."/>
            <person name="Danchin E.G.J."/>
            <person name="Diener A."/>
            <person name="Gale L.R."/>
            <person name="Gardiner D.M."/>
            <person name="Goff S."/>
            <person name="Hammond-Kosack K.E."/>
            <person name="Hilburn K."/>
            <person name="Hua-Van A."/>
            <person name="Jonkers W."/>
            <person name="Kazan K."/>
            <person name="Kodira C.D."/>
            <person name="Koehrsen M."/>
            <person name="Kumar L."/>
            <person name="Lee Y.-H."/>
            <person name="Li L."/>
            <person name="Manners J.M."/>
            <person name="Miranda-Saavedra D."/>
            <person name="Mukherjee M."/>
            <person name="Park G."/>
            <person name="Park J."/>
            <person name="Park S.-Y."/>
            <person name="Proctor R.H."/>
            <person name="Regev A."/>
            <person name="Ruiz-Roldan M.C."/>
            <person name="Sain D."/>
            <person name="Sakthikumar S."/>
            <person name="Sykes S."/>
            <person name="Schwartz D.C."/>
            <person name="Turgeon B.G."/>
            <person name="Wapinski I."/>
            <person name="Yoder O."/>
            <person name="Young S."/>
            <person name="Zeng Q."/>
            <person name="Zhou S."/>
            <person name="Galagan J."/>
            <person name="Cuomo C.A."/>
            <person name="Kistler H.C."/>
            <person name="Rep M."/>
        </authorList>
    </citation>
    <scope>GENOME REANNOTATION</scope>
    <source>
        <strain>ATCC MYA-4620 / CBS 123657 / FGSC 9075 / NRRL 31084 / PH-1</strain>
    </source>
</reference>
<reference key="3">
    <citation type="journal article" date="2015" name="BMC Genomics">
        <title>The completed genome sequence of the pathogenic ascomycete fungus Fusarium graminearum.</title>
        <authorList>
            <person name="King R."/>
            <person name="Urban M."/>
            <person name="Hammond-Kosack M.C.U."/>
            <person name="Hassani-Pak K."/>
            <person name="Hammond-Kosack K.E."/>
        </authorList>
    </citation>
    <scope>NUCLEOTIDE SEQUENCE [LARGE SCALE GENOMIC DNA]</scope>
    <source>
        <strain>ATCC MYA-4620 / CBS 123657 / FGSC 9075 / NRRL 31084 / PH-1</strain>
    </source>
</reference>
<dbReference type="EMBL" id="DS231663">
    <property type="protein sequence ID" value="ESU05296.1"/>
    <property type="molecule type" value="Genomic_DNA"/>
</dbReference>
<dbReference type="EMBL" id="HG970332">
    <property type="protein sequence ID" value="CEF72032.1"/>
    <property type="molecule type" value="Genomic_DNA"/>
</dbReference>
<dbReference type="RefSeq" id="XP_011315781.1">
    <property type="nucleotide sequence ID" value="XM_011317479.1"/>
</dbReference>
<dbReference type="SMR" id="Q4IRI9"/>
<dbReference type="STRING" id="229533.Q4IRI9"/>
<dbReference type="GeneID" id="23547673"/>
<dbReference type="KEGG" id="fgr:FGSG_00169"/>
<dbReference type="VEuPathDB" id="FungiDB:FGRAMPH1_01G00463"/>
<dbReference type="eggNOG" id="KOG3869">
    <property type="taxonomic scope" value="Eukaryota"/>
</dbReference>
<dbReference type="HOGENOM" id="CLU_025093_0_0_1"/>
<dbReference type="InParanoid" id="Q4IRI9"/>
<dbReference type="OrthoDB" id="140212at110618"/>
<dbReference type="Proteomes" id="UP000070720">
    <property type="component" value="Chromosome 1"/>
</dbReference>
<dbReference type="GO" id="GO:0005684">
    <property type="term" value="C:U2-type spliceosomal complex"/>
    <property type="evidence" value="ECO:0007669"/>
    <property type="project" value="TreeGrafter"/>
</dbReference>
<dbReference type="GO" id="GO:0000398">
    <property type="term" value="P:mRNA splicing, via spliceosome"/>
    <property type="evidence" value="ECO:0007669"/>
    <property type="project" value="TreeGrafter"/>
</dbReference>
<dbReference type="InterPro" id="IPR019339">
    <property type="entry name" value="CIR_N_dom"/>
</dbReference>
<dbReference type="InterPro" id="IPR022209">
    <property type="entry name" value="CWC25"/>
</dbReference>
<dbReference type="InterPro" id="IPR051376">
    <property type="entry name" value="CWC25_splicing_factor"/>
</dbReference>
<dbReference type="PANTHER" id="PTHR16196">
    <property type="entry name" value="CELL CYCLE CONTROL PROTEIN CWF25"/>
    <property type="match status" value="1"/>
</dbReference>
<dbReference type="PANTHER" id="PTHR16196:SF0">
    <property type="entry name" value="PRE-MRNA-SPLICING FACTOR CWC25 HOMOLOG"/>
    <property type="match status" value="1"/>
</dbReference>
<dbReference type="Pfam" id="PF10197">
    <property type="entry name" value="Cir_N"/>
    <property type="match status" value="1"/>
</dbReference>
<dbReference type="Pfam" id="PF12542">
    <property type="entry name" value="CWC25"/>
    <property type="match status" value="1"/>
</dbReference>
<dbReference type="SMART" id="SM01083">
    <property type="entry name" value="Cir_N"/>
    <property type="match status" value="1"/>
</dbReference>
<organism>
    <name type="scientific">Gibberella zeae (strain ATCC MYA-4620 / CBS 123657 / FGSC 9075 / NRRL 31084 / PH-1)</name>
    <name type="common">Wheat head blight fungus</name>
    <name type="synonym">Fusarium graminearum</name>
    <dbReference type="NCBI Taxonomy" id="229533"/>
    <lineage>
        <taxon>Eukaryota</taxon>
        <taxon>Fungi</taxon>
        <taxon>Dikarya</taxon>
        <taxon>Ascomycota</taxon>
        <taxon>Pezizomycotina</taxon>
        <taxon>Sordariomycetes</taxon>
        <taxon>Hypocreomycetidae</taxon>
        <taxon>Hypocreales</taxon>
        <taxon>Nectriaceae</taxon>
        <taxon>Fusarium</taxon>
    </lineage>
</organism>
<proteinExistence type="inferred from homology"/>
<name>CWC25_GIBZE</name>
<feature type="chain" id="PRO_0000079590" description="Pre-mRNA-splicing factor CWC25">
    <location>
        <begin position="1"/>
        <end position="393"/>
    </location>
</feature>
<feature type="region of interest" description="Disordered" evidence="3">
    <location>
        <begin position="38"/>
        <end position="61"/>
    </location>
</feature>
<feature type="region of interest" description="Disordered" evidence="3">
    <location>
        <begin position="151"/>
        <end position="393"/>
    </location>
</feature>
<feature type="coiled-coil region" evidence="2">
    <location>
        <begin position="25"/>
        <end position="65"/>
    </location>
</feature>
<feature type="coiled-coil region" evidence="2">
    <location>
        <begin position="310"/>
        <end position="358"/>
    </location>
</feature>
<feature type="compositionally biased region" description="Basic and acidic residues" evidence="3">
    <location>
        <begin position="38"/>
        <end position="55"/>
    </location>
</feature>
<feature type="compositionally biased region" description="Basic and acidic residues" evidence="3">
    <location>
        <begin position="168"/>
        <end position="180"/>
    </location>
</feature>
<feature type="compositionally biased region" description="Basic residues" evidence="3">
    <location>
        <begin position="181"/>
        <end position="191"/>
    </location>
</feature>
<feature type="compositionally biased region" description="Basic and acidic residues" evidence="3">
    <location>
        <begin position="213"/>
        <end position="232"/>
    </location>
</feature>
<feature type="compositionally biased region" description="Basic and acidic residues" evidence="3">
    <location>
        <begin position="240"/>
        <end position="288"/>
    </location>
</feature>
<feature type="compositionally biased region" description="Basic and acidic residues" evidence="3">
    <location>
        <begin position="296"/>
        <end position="318"/>
    </location>
</feature>
<feature type="compositionally biased region" description="Basic and acidic residues" evidence="3">
    <location>
        <begin position="331"/>
        <end position="361"/>
    </location>
</feature>
<sequence length="393" mass="46741">MGGGDLNLKKSFHPALRRNQQAVWDEEQKALAERKRTQQRLDEIKEERAKEEVQRQLEAAGGKKKVDRVEWMYQGPNDGQTGTTEETEAYLLGKRRIDNLIKGTEHKKLEKDAGTESFMALQNANTARDTAAKIREDPLLAIKRQEQAAYEAMMNDPARRRQLLASRGIDEDKKDKSRRKEDRHRRRHRHRSADGEDRHHRRRRSYSRSQSPRRRDGSREDRHRRRRDDSRDRHSRRRRDGSDEEGRRDRDNRSGGDRHRHDGDRRHSDEPRDERRDNRRDERPRDNNRQYSRRSYPSDRRPRHNEEDDKAKEEERQRKLAAMQSAATELDVDRQERLADLEKREQAAREADNKARERGGDRGFVNKLHQQAEHKGLAERMGGARRGYQKDDD</sequence>
<protein>
    <recommendedName>
        <fullName>Pre-mRNA-splicing factor CWC25</fullName>
    </recommendedName>
</protein>